<feature type="chain" id="PRO_0000301173" description="Sec-independent protein translocase protein TatB">
    <location>
        <begin position="1"/>
        <end position="184"/>
    </location>
</feature>
<feature type="transmembrane region" description="Helical" evidence="1">
    <location>
        <begin position="1"/>
        <end position="21"/>
    </location>
</feature>
<feature type="region of interest" description="Disordered" evidence="2">
    <location>
        <begin position="149"/>
        <end position="184"/>
    </location>
</feature>
<feature type="compositionally biased region" description="Acidic residues" evidence="2">
    <location>
        <begin position="149"/>
        <end position="168"/>
    </location>
</feature>
<gene>
    <name evidence="1" type="primary">tatB</name>
    <name type="ordered locus">HS_0546</name>
</gene>
<name>TATB_HISS1</name>
<evidence type="ECO:0000255" key="1">
    <source>
        <dbReference type="HAMAP-Rule" id="MF_00237"/>
    </source>
</evidence>
<evidence type="ECO:0000256" key="2">
    <source>
        <dbReference type="SAM" id="MobiDB-lite"/>
    </source>
</evidence>
<comment type="function">
    <text evidence="1">Part of the twin-arginine translocation (Tat) system that transports large folded proteins containing a characteristic twin-arginine motif in their signal peptide across membranes. Together with TatC, TatB is part of a receptor directly interacting with Tat signal peptides. TatB may form an oligomeric binding site that transiently accommodates folded Tat precursor proteins before their translocation.</text>
</comment>
<comment type="subunit">
    <text evidence="1">The Tat system comprises two distinct complexes: a TatABC complex, containing multiple copies of TatA, TatB and TatC subunits, and a separate TatA complex, containing only TatA subunits. Substrates initially bind to the TatABC complex, which probably triggers association of the separate TatA complex to form the active translocon.</text>
</comment>
<comment type="subcellular location">
    <subcellularLocation>
        <location evidence="1">Cell inner membrane</location>
        <topology evidence="1">Single-pass membrane protein</topology>
    </subcellularLocation>
</comment>
<comment type="similarity">
    <text evidence="1">Belongs to the TatB family.</text>
</comment>
<keyword id="KW-0997">Cell inner membrane</keyword>
<keyword id="KW-1003">Cell membrane</keyword>
<keyword id="KW-0472">Membrane</keyword>
<keyword id="KW-0653">Protein transport</keyword>
<keyword id="KW-0811">Translocation</keyword>
<keyword id="KW-0812">Transmembrane</keyword>
<keyword id="KW-1133">Transmembrane helix</keyword>
<keyword id="KW-0813">Transport</keyword>
<protein>
    <recommendedName>
        <fullName evidence="1">Sec-independent protein translocase protein TatB</fullName>
    </recommendedName>
</protein>
<dbReference type="EMBL" id="CP000436">
    <property type="protein sequence ID" value="ABI24823.1"/>
    <property type="molecule type" value="Genomic_DNA"/>
</dbReference>
<dbReference type="SMR" id="Q0I206"/>
<dbReference type="KEGG" id="hso:HS_0546"/>
<dbReference type="eggNOG" id="COG1826">
    <property type="taxonomic scope" value="Bacteria"/>
</dbReference>
<dbReference type="HOGENOM" id="CLU_086034_1_0_6"/>
<dbReference type="GO" id="GO:0033281">
    <property type="term" value="C:TAT protein transport complex"/>
    <property type="evidence" value="ECO:0007669"/>
    <property type="project" value="UniProtKB-UniRule"/>
</dbReference>
<dbReference type="GO" id="GO:0008320">
    <property type="term" value="F:protein transmembrane transporter activity"/>
    <property type="evidence" value="ECO:0007669"/>
    <property type="project" value="UniProtKB-UniRule"/>
</dbReference>
<dbReference type="GO" id="GO:0043953">
    <property type="term" value="P:protein transport by the Tat complex"/>
    <property type="evidence" value="ECO:0007669"/>
    <property type="project" value="UniProtKB-UniRule"/>
</dbReference>
<dbReference type="Gene3D" id="1.20.5.3310">
    <property type="match status" value="1"/>
</dbReference>
<dbReference type="HAMAP" id="MF_00237">
    <property type="entry name" value="TatB"/>
    <property type="match status" value="1"/>
</dbReference>
<dbReference type="InterPro" id="IPR018448">
    <property type="entry name" value="TatB"/>
</dbReference>
<dbReference type="NCBIfam" id="TIGR01410">
    <property type="entry name" value="tatB"/>
    <property type="match status" value="1"/>
</dbReference>
<dbReference type="PANTHER" id="PTHR33162">
    <property type="entry name" value="SEC-INDEPENDENT PROTEIN TRANSLOCASE PROTEIN TATA, CHLOROPLASTIC"/>
    <property type="match status" value="1"/>
</dbReference>
<dbReference type="PANTHER" id="PTHR33162:SF1">
    <property type="entry name" value="SEC-INDEPENDENT PROTEIN TRANSLOCASE PROTEIN TATA, CHLOROPLASTIC"/>
    <property type="match status" value="1"/>
</dbReference>
<dbReference type="PRINTS" id="PR01506">
    <property type="entry name" value="TATBPROTEIN"/>
</dbReference>
<dbReference type="SUPFAM" id="SSF47162">
    <property type="entry name" value="Apolipoprotein"/>
    <property type="match status" value="1"/>
</dbReference>
<sequence length="184" mass="20387">MFDIGFSELVLLFVVGLIVLGPQRLPVAVRTVMGWVRTVRSLATNVQNELSQELKLKELQESIKKAEDLNISQLSPELSETVEELRQSAQKIKMNLEEKAAETNSSVEEQVQELKSAVQNSQGTATTEIEKNFDFPSGELSPAELAELAEEGEPMLEMGESDFSEDEQATASSNETIENIKEKV</sequence>
<reference key="1">
    <citation type="journal article" date="2007" name="J. Bacteriol.">
        <title>Complete genome sequence of Haemophilus somnus (Histophilus somni) strain 129Pt and comparison to Haemophilus ducreyi 35000HP and Haemophilus influenzae Rd.</title>
        <authorList>
            <person name="Challacombe J.F."/>
            <person name="Duncan A.J."/>
            <person name="Brettin T.S."/>
            <person name="Bruce D."/>
            <person name="Chertkov O."/>
            <person name="Detter J.C."/>
            <person name="Han C.S."/>
            <person name="Misra M."/>
            <person name="Richardson P."/>
            <person name="Tapia R."/>
            <person name="Thayer N."/>
            <person name="Xie G."/>
            <person name="Inzana T.J."/>
        </authorList>
    </citation>
    <scope>NUCLEOTIDE SEQUENCE [LARGE SCALE GENOMIC DNA]</scope>
    <source>
        <strain>129Pt</strain>
    </source>
</reference>
<organism>
    <name type="scientific">Histophilus somni (strain 129Pt)</name>
    <name type="common">Haemophilus somnus</name>
    <dbReference type="NCBI Taxonomy" id="205914"/>
    <lineage>
        <taxon>Bacteria</taxon>
        <taxon>Pseudomonadati</taxon>
        <taxon>Pseudomonadota</taxon>
        <taxon>Gammaproteobacteria</taxon>
        <taxon>Pasteurellales</taxon>
        <taxon>Pasteurellaceae</taxon>
        <taxon>Histophilus</taxon>
    </lineage>
</organism>
<proteinExistence type="inferred from homology"/>
<accession>Q0I206</accession>